<dbReference type="EMBL" id="AE014075">
    <property type="protein sequence ID" value="AAN80289.1"/>
    <property type="status" value="ALT_INIT"/>
    <property type="molecule type" value="Genomic_DNA"/>
</dbReference>
<dbReference type="RefSeq" id="WP_001295715.1">
    <property type="nucleotide sequence ID" value="NZ_CP051263.1"/>
</dbReference>
<dbReference type="KEGG" id="ecc:c1825"/>
<dbReference type="eggNOG" id="COG3042">
    <property type="taxonomic scope" value="Bacteria"/>
</dbReference>
<dbReference type="HOGENOM" id="CLU_3103793_0_0_6"/>
<dbReference type="Proteomes" id="UP000001410">
    <property type="component" value="Chromosome"/>
</dbReference>
<dbReference type="InterPro" id="IPR005590">
    <property type="entry name" value="DUF333"/>
</dbReference>
<dbReference type="PANTHER" id="PTHR38008:SF1">
    <property type="entry name" value="DUF333 DOMAIN-CONTAINING PROTEIN"/>
    <property type="match status" value="1"/>
</dbReference>
<dbReference type="PANTHER" id="PTHR38008">
    <property type="entry name" value="HEMOLYSIN-RELATED"/>
    <property type="match status" value="1"/>
</dbReference>
<dbReference type="Pfam" id="PF03891">
    <property type="entry name" value="DUF333"/>
    <property type="match status" value="1"/>
</dbReference>
<dbReference type="PROSITE" id="PS51257">
    <property type="entry name" value="PROKAR_LIPOPROTEIN"/>
    <property type="match status" value="1"/>
</dbReference>
<sequence>MRAAFWVGCAALLLSACSSEPVQQATAAHVAPGLKASMSSSGEANCAMIGGSLSVARQLDGTAIGMCALPNGKRCSEQSLAAGSCGSY</sequence>
<feature type="signal peptide" evidence="1">
    <location>
        <begin position="1"/>
        <end position="25"/>
    </location>
</feature>
<feature type="chain" id="PRO_0000042855" description="Uncharacterized protein YdbJ">
    <location>
        <begin position="26"/>
        <end position="88"/>
    </location>
</feature>
<protein>
    <recommendedName>
        <fullName>Uncharacterized protein YdbJ</fullName>
    </recommendedName>
</protein>
<organism>
    <name type="scientific">Escherichia coli O6:H1 (strain CFT073 / ATCC 700928 / UPEC)</name>
    <dbReference type="NCBI Taxonomy" id="199310"/>
    <lineage>
        <taxon>Bacteria</taxon>
        <taxon>Pseudomonadati</taxon>
        <taxon>Pseudomonadota</taxon>
        <taxon>Gammaproteobacteria</taxon>
        <taxon>Enterobacterales</taxon>
        <taxon>Enterobacteriaceae</taxon>
        <taxon>Escherichia</taxon>
    </lineage>
</organism>
<name>YDBJ_ECOL6</name>
<accession>P0ACW3</accession>
<accession>P52646</accession>
<proteinExistence type="inferred from homology"/>
<comment type="sequence caution" evidence="2">
    <conflict type="erroneous initiation">
        <sequence resource="EMBL-CDS" id="AAN80289"/>
    </conflict>
</comment>
<keyword id="KW-1185">Reference proteome</keyword>
<keyword id="KW-0732">Signal</keyword>
<reference key="1">
    <citation type="journal article" date="2002" name="Proc. Natl. Acad. Sci. U.S.A.">
        <title>Extensive mosaic structure revealed by the complete genome sequence of uropathogenic Escherichia coli.</title>
        <authorList>
            <person name="Welch R.A."/>
            <person name="Burland V."/>
            <person name="Plunkett G. III"/>
            <person name="Redford P."/>
            <person name="Roesch P."/>
            <person name="Rasko D."/>
            <person name="Buckles E.L."/>
            <person name="Liou S.-R."/>
            <person name="Boutin A."/>
            <person name="Hackett J."/>
            <person name="Stroud D."/>
            <person name="Mayhew G.F."/>
            <person name="Rose D.J."/>
            <person name="Zhou S."/>
            <person name="Schwartz D.C."/>
            <person name="Perna N.T."/>
            <person name="Mobley H.L.T."/>
            <person name="Donnenberg M.S."/>
            <person name="Blattner F.R."/>
        </authorList>
    </citation>
    <scope>NUCLEOTIDE SEQUENCE [LARGE SCALE GENOMIC DNA]</scope>
    <source>
        <strain>CFT073 / ATCC 700928 / UPEC</strain>
    </source>
</reference>
<gene>
    <name type="primary">ydbJ</name>
    <name type="ordered locus">c1825</name>
</gene>
<evidence type="ECO:0000255" key="1"/>
<evidence type="ECO:0000305" key="2"/>